<sequence>MNVQAHMSGQRSGQVPNQGTVPQNNGNSQMQNLVGSNGAATAVTGAGAATGSGTGVRPSRNIVGAMDHDIMKLRQYMQTLVFNMLQQRQPSPADAASKAKYMDVARRLEEGLFKMAVTKEDYMNRSTLESRITSLIKGRQINNYNQRHANSSSVGTMIPTPGLSQTAGNPNLMVTSSVDATIVGNTNITSTALNTGNPLIAGGMHGGNMSNGYQHSSRNFSLGSGGSMTSMGAQRSTAQMIPTPGFVNSVTNNNSGGFSAEPTIVPQSQQQQQRQHTGGQNSHMLSNHMAAGVRPDMQSKPSGAANSSVNGDVGANEKIVDSGSSYTNASKKLQQGNFSLLSFCPDDLISGQHIESTFHISGEGYSTTNPDPFDGAITSAGTGTKAHNINTASFQPVSRVNSSLSHQQQFQQPPNRFQQQPNQIQQQQQQFLNQRKLKQQTPQQHRLISNDGLGKTQVDSDMVTKVKCEPGMENKSQAPQSQASERFQLSQLQNQYQNSGEDCQADAQLLPVESQSDICTSLPQNSQQIQQMMHPQNIGSDSSNSFSNLAVGVKSESSPQGQWPSKSQENTLMSNAISSGKHIQEDFRQRITGMDEAQPNNLTEGSVIGQNHTSTISESHNLQNSIGTTCRYGNVSHDPKFKNQQRWLLFLRHARSCKPPGGRCQDQNCVTVQKLWSHMDNCADPQCLYPRCRHTKALIGHYKNCKDPRCPVCVPVKTYQQQANVRALARLKNESSAVGSVNRSVVSNDSLSANAGAVSGTPRCADTLDNLQPSLKRLKVEQSFQPVVPKTESCKSSIVSTTEADLSQDAERKDHRPLKSETMEVKVEIPDNSVQAGFGIKETKSEPFENVPKPKPVSEPGKHGLSGDSPKQENIKMKKEPGWPKKEPGCPKKEELVESPELTSKSRKPKIKGVSLTELFTPEQVREHIRGLRQWVGQSKAKAEKNQAMENSMSENSCQLCAVEKLTFEPPPIYCTPCGARIKRNAMYYTVGGGETRHYFCIPCYNESRGDTILAEGTSMPKAKLEKKKNDEEIEESWVQCDKCQAWQHQICALFNGRRNDGGQAEYTCPYCYVIDVEQNERKPLLQSAVLGAKDLPRTILSDHIEQRLFKRLKQERTERARVQGTSYDEIPTVESLVVRVVSSVDKKLEVKSRFLEIFREDNFPTEFPYKSKVVLLFQKIEGVEVCLFGMYVQEFGSECSNPNQRRVYLSYLDSVKYFRPDIKSANGEALRTFVYHEILIGYLEYCKLRGFTSCYIWACPPLKGEDYILYCHPEIQKTPKSDKLREWYLAMLRKAAKEGIVAETTNLYDHFFLQTGECRAKVTAARLPYFDGDYWPGAAEDIISQMSQEDDGRKGNKKGILKKPITKRALKASGQSDFSGNASKDLLLMHKLGETIHPMKEDFIMVHLQHSCTHCCTLMVTGNRWVCSQCKDFQLCDGCYEAEQKREDRERHPVNQKDKHNIFPVEIADIPTDTKDRDEILESEFFDTRQAFLSLCQGNHYQYDTLRRAKHSSMMVLYHLHNPTAPAFVTTCNVCHLDIESGLGWRCEVCPDYDVCNACYKKEGCINHPHKLTTHPSLADQNAQNKEARQLRVLQLRKMLDLLVHASQCRSPVCLYPNCRKVKGLFRHGLRCKVRASGGCVLCKKMWYLLQLHARACKESECDVPRCGDLKEHLRRLQQQSDSRRRAAVMEMMRQRAAEVAGTSG</sequence>
<gene>
    <name type="primary">HAC12</name>
    <name type="ordered locus">At1g16710</name>
    <name type="ORF">F17F16.8</name>
    <name type="ORF">F17F16_21</name>
</gene>
<comment type="function">
    <text evidence="2">Acetyltransferase enzyme. Acetylates histones, giving a specific tag for transcriptional activation.</text>
</comment>
<comment type="catalytic activity">
    <reaction evidence="2">
        <text>L-lysyl-[protein] + acetyl-CoA = N(6)-acetyl-L-lysyl-[protein] + CoA + H(+)</text>
        <dbReference type="Rhea" id="RHEA:45948"/>
        <dbReference type="Rhea" id="RHEA-COMP:9752"/>
        <dbReference type="Rhea" id="RHEA-COMP:10731"/>
        <dbReference type="ChEBI" id="CHEBI:15378"/>
        <dbReference type="ChEBI" id="CHEBI:29969"/>
        <dbReference type="ChEBI" id="CHEBI:57287"/>
        <dbReference type="ChEBI" id="CHEBI:57288"/>
        <dbReference type="ChEBI" id="CHEBI:61930"/>
        <dbReference type="EC" id="2.3.1.48"/>
    </reaction>
</comment>
<comment type="subcellular location">
    <subcellularLocation>
        <location evidence="7">Nucleus</location>
    </subcellularLocation>
</comment>
<comment type="alternative products">
    <event type="alternative splicing"/>
    <isoform>
        <id>Q9FWQ5-1</id>
        <name>1</name>
        <sequence type="displayed"/>
    </isoform>
    <text>A number of isoforms are produced. According to EST sequences.</text>
</comment>
<comment type="sequence caution" evidence="7">
    <conflict type="erroneous gene model prediction">
        <sequence resource="EMBL-CDS" id="AAG09087"/>
    </conflict>
</comment>
<protein>
    <recommendedName>
        <fullName>Histone acetyltransferase HAC12</fullName>
        <ecNumber evidence="2">2.3.1.48</ecNumber>
    </recommendedName>
</protein>
<reference key="1">
    <citation type="journal article" date="2000" name="Nature">
        <title>Sequence and analysis of chromosome 1 of the plant Arabidopsis thaliana.</title>
        <authorList>
            <person name="Theologis A."/>
            <person name="Ecker J.R."/>
            <person name="Palm C.J."/>
            <person name="Federspiel N.A."/>
            <person name="Kaul S."/>
            <person name="White O."/>
            <person name="Alonso J."/>
            <person name="Altafi H."/>
            <person name="Araujo R."/>
            <person name="Bowman C.L."/>
            <person name="Brooks S.Y."/>
            <person name="Buehler E."/>
            <person name="Chan A."/>
            <person name="Chao Q."/>
            <person name="Chen H."/>
            <person name="Cheuk R.F."/>
            <person name="Chin C.W."/>
            <person name="Chung M.K."/>
            <person name="Conn L."/>
            <person name="Conway A.B."/>
            <person name="Conway A.R."/>
            <person name="Creasy T.H."/>
            <person name="Dewar K."/>
            <person name="Dunn P."/>
            <person name="Etgu P."/>
            <person name="Feldblyum T.V."/>
            <person name="Feng J.-D."/>
            <person name="Fong B."/>
            <person name="Fujii C.Y."/>
            <person name="Gill J.E."/>
            <person name="Goldsmith A.D."/>
            <person name="Haas B."/>
            <person name="Hansen N.F."/>
            <person name="Hughes B."/>
            <person name="Huizar L."/>
            <person name="Hunter J.L."/>
            <person name="Jenkins J."/>
            <person name="Johnson-Hopson C."/>
            <person name="Khan S."/>
            <person name="Khaykin E."/>
            <person name="Kim C.J."/>
            <person name="Koo H.L."/>
            <person name="Kremenetskaia I."/>
            <person name="Kurtz D.B."/>
            <person name="Kwan A."/>
            <person name="Lam B."/>
            <person name="Langin-Hooper S."/>
            <person name="Lee A."/>
            <person name="Lee J.M."/>
            <person name="Lenz C.A."/>
            <person name="Li J.H."/>
            <person name="Li Y.-P."/>
            <person name="Lin X."/>
            <person name="Liu S.X."/>
            <person name="Liu Z.A."/>
            <person name="Luros J.S."/>
            <person name="Maiti R."/>
            <person name="Marziali A."/>
            <person name="Militscher J."/>
            <person name="Miranda M."/>
            <person name="Nguyen M."/>
            <person name="Nierman W.C."/>
            <person name="Osborne B.I."/>
            <person name="Pai G."/>
            <person name="Peterson J."/>
            <person name="Pham P.K."/>
            <person name="Rizzo M."/>
            <person name="Rooney T."/>
            <person name="Rowley D."/>
            <person name="Sakano H."/>
            <person name="Salzberg S.L."/>
            <person name="Schwartz J.R."/>
            <person name="Shinn P."/>
            <person name="Southwick A.M."/>
            <person name="Sun H."/>
            <person name="Tallon L.J."/>
            <person name="Tambunga G."/>
            <person name="Toriumi M.J."/>
            <person name="Town C.D."/>
            <person name="Utterback T."/>
            <person name="Van Aken S."/>
            <person name="Vaysberg M."/>
            <person name="Vysotskaia V.S."/>
            <person name="Walker M."/>
            <person name="Wu D."/>
            <person name="Yu G."/>
            <person name="Fraser C.M."/>
            <person name="Venter J.C."/>
            <person name="Davis R.W."/>
        </authorList>
    </citation>
    <scope>NUCLEOTIDE SEQUENCE [LARGE SCALE GENOMIC DNA]</scope>
    <source>
        <strain>cv. Columbia</strain>
    </source>
</reference>
<reference key="2">
    <citation type="journal article" date="2017" name="Plant J.">
        <title>Araport11: a complete reannotation of the Arabidopsis thaliana reference genome.</title>
        <authorList>
            <person name="Cheng C.Y."/>
            <person name="Krishnakumar V."/>
            <person name="Chan A.P."/>
            <person name="Thibaud-Nissen F."/>
            <person name="Schobel S."/>
            <person name="Town C.D."/>
        </authorList>
    </citation>
    <scope>GENOME REANNOTATION</scope>
    <source>
        <strain>cv. Columbia</strain>
    </source>
</reference>
<reference key="3">
    <citation type="journal article" date="2002" name="Nucleic Acids Res.">
        <title>Analysis of histone acetyltransferase and histone deacetylase families of Arabidopsis thaliana suggests functional diversification of chromatin modification among multicellular eukaryotes.</title>
        <authorList>
            <person name="Pandey R."/>
            <person name="Mueller A."/>
            <person name="Napoli C.A."/>
            <person name="Selinger D.A."/>
            <person name="Pikaard C.S."/>
            <person name="Richards E.J."/>
            <person name="Bender J."/>
            <person name="Mount D.W."/>
            <person name="Jorgensen R.A."/>
        </authorList>
    </citation>
    <scope>IDENTIFICATION</scope>
    <scope>NOMENCLATURE</scope>
</reference>
<organism>
    <name type="scientific">Arabidopsis thaliana</name>
    <name type="common">Mouse-ear cress</name>
    <dbReference type="NCBI Taxonomy" id="3702"/>
    <lineage>
        <taxon>Eukaryota</taxon>
        <taxon>Viridiplantae</taxon>
        <taxon>Streptophyta</taxon>
        <taxon>Embryophyta</taxon>
        <taxon>Tracheophyta</taxon>
        <taxon>Spermatophyta</taxon>
        <taxon>Magnoliopsida</taxon>
        <taxon>eudicotyledons</taxon>
        <taxon>Gunneridae</taxon>
        <taxon>Pentapetalae</taxon>
        <taxon>rosids</taxon>
        <taxon>malvids</taxon>
        <taxon>Brassicales</taxon>
        <taxon>Brassicaceae</taxon>
        <taxon>Camelineae</taxon>
        <taxon>Arabidopsis</taxon>
    </lineage>
</organism>
<dbReference type="EC" id="2.3.1.48" evidence="2"/>
<dbReference type="EMBL" id="AC026237">
    <property type="protein sequence ID" value="AAG09087.1"/>
    <property type="status" value="ALT_SEQ"/>
    <property type="molecule type" value="Genomic_DNA"/>
</dbReference>
<dbReference type="EMBL" id="CP002684">
    <property type="protein sequence ID" value="AEE29487.1"/>
    <property type="molecule type" value="Genomic_DNA"/>
</dbReference>
<dbReference type="PIR" id="E86302">
    <property type="entry name" value="E86302"/>
</dbReference>
<dbReference type="RefSeq" id="NP_173115.1">
    <molecule id="Q9FWQ5-1"/>
    <property type="nucleotide sequence ID" value="NM_101532.3"/>
</dbReference>
<dbReference type="SMR" id="Q9FWQ5"/>
<dbReference type="FunCoup" id="Q9FWQ5">
    <property type="interactions" value="1181"/>
</dbReference>
<dbReference type="STRING" id="3702.Q9FWQ5"/>
<dbReference type="GlyGen" id="Q9FWQ5">
    <property type="glycosylation" value="2 sites, 1 O-linked glycan (2 sites)"/>
</dbReference>
<dbReference type="iPTMnet" id="Q9FWQ5"/>
<dbReference type="PaxDb" id="3702-AT1G16710.1"/>
<dbReference type="ProteomicsDB" id="247213">
    <molecule id="Q9FWQ5-1"/>
</dbReference>
<dbReference type="EnsemblPlants" id="AT1G16710.1">
    <molecule id="Q9FWQ5-1"/>
    <property type="protein sequence ID" value="AT1G16710.1"/>
    <property type="gene ID" value="AT1G16710"/>
</dbReference>
<dbReference type="GeneID" id="838242"/>
<dbReference type="Gramene" id="AT1G16710.1">
    <molecule id="Q9FWQ5-1"/>
    <property type="protein sequence ID" value="AT1G16710.1"/>
    <property type="gene ID" value="AT1G16710"/>
</dbReference>
<dbReference type="KEGG" id="ath:AT1G16710"/>
<dbReference type="Araport" id="AT1G16710"/>
<dbReference type="TAIR" id="AT1G16710">
    <property type="gene designation" value="HAC12"/>
</dbReference>
<dbReference type="eggNOG" id="KOG1778">
    <property type="taxonomic scope" value="Eukaryota"/>
</dbReference>
<dbReference type="InParanoid" id="Q9FWQ5"/>
<dbReference type="PhylomeDB" id="Q9FWQ5"/>
<dbReference type="PRO" id="PR:Q9FWQ5"/>
<dbReference type="Proteomes" id="UP000006548">
    <property type="component" value="Chromosome 1"/>
</dbReference>
<dbReference type="ExpressionAtlas" id="Q9FWQ5">
    <property type="expression patterns" value="baseline and differential"/>
</dbReference>
<dbReference type="GO" id="GO:0005634">
    <property type="term" value="C:nucleus"/>
    <property type="evidence" value="ECO:0007669"/>
    <property type="project" value="UniProtKB-SubCell"/>
</dbReference>
<dbReference type="GO" id="GO:0004402">
    <property type="term" value="F:histone acetyltransferase activity"/>
    <property type="evidence" value="ECO:0000314"/>
    <property type="project" value="TAIR"/>
</dbReference>
<dbReference type="GO" id="GO:0008270">
    <property type="term" value="F:zinc ion binding"/>
    <property type="evidence" value="ECO:0007669"/>
    <property type="project" value="UniProtKB-KW"/>
</dbReference>
<dbReference type="GO" id="GO:0006473">
    <property type="term" value="P:protein acetylation"/>
    <property type="evidence" value="ECO:0000315"/>
    <property type="project" value="TAIR"/>
</dbReference>
<dbReference type="GO" id="GO:0006355">
    <property type="term" value="P:regulation of DNA-templated transcription"/>
    <property type="evidence" value="ECO:0007669"/>
    <property type="project" value="InterPro"/>
</dbReference>
<dbReference type="CDD" id="cd15614">
    <property type="entry name" value="PHD_HAC_like"/>
    <property type="match status" value="1"/>
</dbReference>
<dbReference type="FunFam" id="3.30.60.90:FF:000018">
    <property type="entry name" value="Histone acetyltransferase HAC1"/>
    <property type="match status" value="1"/>
</dbReference>
<dbReference type="FunFam" id="1.20.1020.10:FF:000003">
    <property type="entry name" value="Histone acetyltransferase HAC1-like protein"/>
    <property type="match status" value="1"/>
</dbReference>
<dbReference type="FunFam" id="1.20.1020.10:FF:000006">
    <property type="entry name" value="Histone acetyltransferase of the CBP family 12"/>
    <property type="match status" value="1"/>
</dbReference>
<dbReference type="FunFam" id="3.30.60.90:FF:000022">
    <property type="entry name" value="Histone acetyltransferase of the CBP family 12"/>
    <property type="match status" value="1"/>
</dbReference>
<dbReference type="Gene3D" id="3.30.60.90">
    <property type="match status" value="2"/>
</dbReference>
<dbReference type="Gene3D" id="1.20.1020.10">
    <property type="entry name" value="TAZ domain"/>
    <property type="match status" value="2"/>
</dbReference>
<dbReference type="Gene3D" id="3.30.40.10">
    <property type="entry name" value="Zinc/RING finger domain, C3HC4 (zinc finger)"/>
    <property type="match status" value="1"/>
</dbReference>
<dbReference type="InterPro" id="IPR031162">
    <property type="entry name" value="CBP_P300_HAT"/>
</dbReference>
<dbReference type="InterPro" id="IPR013178">
    <property type="entry name" value="Histone_AcTrfase_Rtt109/CBP"/>
</dbReference>
<dbReference type="InterPro" id="IPR035898">
    <property type="entry name" value="TAZ_dom_sf"/>
</dbReference>
<dbReference type="InterPro" id="IPR019786">
    <property type="entry name" value="Zinc_finger_PHD-type_CS"/>
</dbReference>
<dbReference type="InterPro" id="IPR011011">
    <property type="entry name" value="Znf_FYVE_PHD"/>
</dbReference>
<dbReference type="InterPro" id="IPR019787">
    <property type="entry name" value="Znf_PHD-finger"/>
</dbReference>
<dbReference type="InterPro" id="IPR013083">
    <property type="entry name" value="Znf_RING/FYVE/PHD"/>
</dbReference>
<dbReference type="InterPro" id="IPR000197">
    <property type="entry name" value="Znf_TAZ"/>
</dbReference>
<dbReference type="InterPro" id="IPR000433">
    <property type="entry name" value="Znf_ZZ"/>
</dbReference>
<dbReference type="InterPro" id="IPR043145">
    <property type="entry name" value="Znf_ZZ_sf"/>
</dbReference>
<dbReference type="PANTHER" id="PTHR13808">
    <property type="entry name" value="CBP/P300-RELATED"/>
    <property type="match status" value="1"/>
</dbReference>
<dbReference type="PANTHER" id="PTHR13808:SF1">
    <property type="entry name" value="HISTONE ACETYLTRANSFERASE"/>
    <property type="match status" value="1"/>
</dbReference>
<dbReference type="Pfam" id="PF08214">
    <property type="entry name" value="HAT_KAT11"/>
    <property type="match status" value="1"/>
</dbReference>
<dbReference type="Pfam" id="PF00628">
    <property type="entry name" value="PHD"/>
    <property type="match status" value="1"/>
</dbReference>
<dbReference type="Pfam" id="PF02135">
    <property type="entry name" value="zf-TAZ"/>
    <property type="match status" value="2"/>
</dbReference>
<dbReference type="Pfam" id="PF00569">
    <property type="entry name" value="ZZ"/>
    <property type="match status" value="1"/>
</dbReference>
<dbReference type="SMART" id="SM01250">
    <property type="entry name" value="KAT11"/>
    <property type="match status" value="1"/>
</dbReference>
<dbReference type="SMART" id="SM00551">
    <property type="entry name" value="ZnF_TAZ"/>
    <property type="match status" value="2"/>
</dbReference>
<dbReference type="SMART" id="SM00291">
    <property type="entry name" value="ZnF_ZZ"/>
    <property type="match status" value="2"/>
</dbReference>
<dbReference type="SUPFAM" id="SSF57903">
    <property type="entry name" value="FYVE/PHD zinc finger"/>
    <property type="match status" value="1"/>
</dbReference>
<dbReference type="SUPFAM" id="SSF57850">
    <property type="entry name" value="RING/U-box"/>
    <property type="match status" value="2"/>
</dbReference>
<dbReference type="SUPFAM" id="SSF57933">
    <property type="entry name" value="TAZ domain"/>
    <property type="match status" value="2"/>
</dbReference>
<dbReference type="PROSITE" id="PS51727">
    <property type="entry name" value="CBP_P300_HAT"/>
    <property type="match status" value="1"/>
</dbReference>
<dbReference type="PROSITE" id="PS01359">
    <property type="entry name" value="ZF_PHD_1"/>
    <property type="match status" value="1"/>
</dbReference>
<dbReference type="PROSITE" id="PS50134">
    <property type="entry name" value="ZF_TAZ"/>
    <property type="match status" value="2"/>
</dbReference>
<dbReference type="PROSITE" id="PS01357">
    <property type="entry name" value="ZF_ZZ_1"/>
    <property type="match status" value="2"/>
</dbReference>
<dbReference type="PROSITE" id="PS50135">
    <property type="entry name" value="ZF_ZZ_2"/>
    <property type="match status" value="2"/>
</dbReference>
<accession>Q9FWQ5</accession>
<keyword id="KW-0010">Activator</keyword>
<keyword id="KW-0012">Acyltransferase</keyword>
<keyword id="KW-0025">Alternative splicing</keyword>
<keyword id="KW-0156">Chromatin regulator</keyword>
<keyword id="KW-0479">Metal-binding</keyword>
<keyword id="KW-0539">Nucleus</keyword>
<keyword id="KW-1185">Reference proteome</keyword>
<keyword id="KW-0677">Repeat</keyword>
<keyword id="KW-0804">Transcription</keyword>
<keyword id="KW-0805">Transcription regulation</keyword>
<keyword id="KW-0808">Transferase</keyword>
<keyword id="KW-0862">Zinc</keyword>
<keyword id="KW-0863">Zinc-finger</keyword>
<name>HAC12_ARATH</name>
<evidence type="ECO:0000250" key="1">
    <source>
        <dbReference type="UniProtKB" id="Q09472"/>
    </source>
</evidence>
<evidence type="ECO:0000250" key="2">
    <source>
        <dbReference type="UniProtKB" id="Q9C5X9"/>
    </source>
</evidence>
<evidence type="ECO:0000255" key="3">
    <source>
        <dbReference type="PROSITE-ProRule" id="PRU00203"/>
    </source>
</evidence>
<evidence type="ECO:0000255" key="4">
    <source>
        <dbReference type="PROSITE-ProRule" id="PRU00228"/>
    </source>
</evidence>
<evidence type="ECO:0000255" key="5">
    <source>
        <dbReference type="PROSITE-ProRule" id="PRU01065"/>
    </source>
</evidence>
<evidence type="ECO:0000256" key="6">
    <source>
        <dbReference type="SAM" id="MobiDB-lite"/>
    </source>
</evidence>
<evidence type="ECO:0000305" key="7"/>
<feature type="chain" id="PRO_0000269744" description="Histone acetyltransferase HAC12">
    <location>
        <begin position="1"/>
        <end position="1706"/>
    </location>
</feature>
<feature type="domain" description="CBP/p300-type HAT" evidence="5">
    <location>
        <begin position="1090"/>
        <end position="1526"/>
    </location>
</feature>
<feature type="zinc finger region" description="TAZ-type 1" evidence="3">
    <location>
        <begin position="637"/>
        <end position="716"/>
    </location>
</feature>
<feature type="zinc finger region" description="PHD-type">
    <location>
        <begin position="998"/>
        <end position="1075"/>
    </location>
</feature>
<feature type="zinc finger region" description="ZZ-type 1" evidence="4">
    <location>
        <begin position="1408"/>
        <end position="1471"/>
    </location>
</feature>
<feature type="zinc finger region" description="ZZ-type 2" evidence="4">
    <location>
        <begin position="1528"/>
        <end position="1581"/>
    </location>
</feature>
<feature type="zinc finger region" description="TAZ-type 2" evidence="3">
    <location>
        <begin position="1588"/>
        <end position="1671"/>
    </location>
</feature>
<feature type="region of interest" description="Disordered" evidence="6">
    <location>
        <begin position="1"/>
        <end position="33"/>
    </location>
</feature>
<feature type="region of interest" description="Disordered" evidence="6">
    <location>
        <begin position="251"/>
        <end position="284"/>
    </location>
</feature>
<feature type="region of interest" description="Disordered" evidence="6">
    <location>
        <begin position="397"/>
        <end position="456"/>
    </location>
</feature>
<feature type="region of interest" description="Disordered" evidence="6">
    <location>
        <begin position="524"/>
        <end position="543"/>
    </location>
</feature>
<feature type="region of interest" description="Disordered" evidence="6">
    <location>
        <begin position="791"/>
        <end position="909"/>
    </location>
</feature>
<feature type="compositionally biased region" description="Polar residues" evidence="6">
    <location>
        <begin position="397"/>
        <end position="406"/>
    </location>
</feature>
<feature type="compositionally biased region" description="Low complexity" evidence="6">
    <location>
        <begin position="407"/>
        <end position="434"/>
    </location>
</feature>
<feature type="compositionally biased region" description="Polar residues" evidence="6">
    <location>
        <begin position="794"/>
        <end position="805"/>
    </location>
</feature>
<feature type="compositionally biased region" description="Basic and acidic residues" evidence="6">
    <location>
        <begin position="809"/>
        <end position="829"/>
    </location>
</feature>
<feature type="compositionally biased region" description="Basic and acidic residues" evidence="6">
    <location>
        <begin position="870"/>
        <end position="896"/>
    </location>
</feature>
<feature type="binding site" evidence="1">
    <location>
        <begin position="1213"/>
        <end position="1215"/>
    </location>
    <ligand>
        <name>acetyl-CoA</name>
        <dbReference type="ChEBI" id="CHEBI:57288"/>
    </ligand>
</feature>
<feature type="binding site" evidence="1">
    <location>
        <begin position="1232"/>
        <end position="1233"/>
    </location>
    <ligand>
        <name>acetyl-CoA</name>
        <dbReference type="ChEBI" id="CHEBI:57288"/>
    </ligand>
</feature>
<feature type="binding site" evidence="1">
    <location>
        <position position="1288"/>
    </location>
    <ligand>
        <name>acetyl-CoA</name>
        <dbReference type="ChEBI" id="CHEBI:57288"/>
    </ligand>
</feature>
<feature type="binding site" evidence="4">
    <location>
        <position position="1413"/>
    </location>
    <ligand>
        <name>Zn(2+)</name>
        <dbReference type="ChEBI" id="CHEBI:29105"/>
        <label>1</label>
    </ligand>
</feature>
<feature type="binding site" evidence="4">
    <location>
        <position position="1416"/>
    </location>
    <ligand>
        <name>Zn(2+)</name>
        <dbReference type="ChEBI" id="CHEBI:29105"/>
        <label>1</label>
    </ligand>
</feature>
<feature type="binding site" evidence="4">
    <location>
        <position position="1428"/>
    </location>
    <ligand>
        <name>Zn(2+)</name>
        <dbReference type="ChEBI" id="CHEBI:29105"/>
        <label>2</label>
    </ligand>
</feature>
<feature type="binding site" evidence="4">
    <location>
        <position position="1431"/>
    </location>
    <ligand>
        <name>Zn(2+)</name>
        <dbReference type="ChEBI" id="CHEBI:29105"/>
        <label>2</label>
    </ligand>
</feature>
<feature type="binding site" evidence="4">
    <location>
        <position position="1437"/>
    </location>
    <ligand>
        <name>Zn(2+)</name>
        <dbReference type="ChEBI" id="CHEBI:29105"/>
        <label>1</label>
    </ligand>
</feature>
<feature type="binding site" evidence="4">
    <location>
        <position position="1440"/>
    </location>
    <ligand>
        <name>Zn(2+)</name>
        <dbReference type="ChEBI" id="CHEBI:29105"/>
        <label>1</label>
    </ligand>
</feature>
<feature type="binding site" evidence="4">
    <location>
        <position position="1453"/>
    </location>
    <ligand>
        <name>Zn(2+)</name>
        <dbReference type="ChEBI" id="CHEBI:29105"/>
        <label>2</label>
    </ligand>
</feature>
<feature type="binding site" evidence="4">
    <location>
        <position position="1461"/>
    </location>
    <ligand>
        <name>Zn(2+)</name>
        <dbReference type="ChEBI" id="CHEBI:29105"/>
        <label>2</label>
    </ligand>
</feature>
<feature type="binding site" evidence="4">
    <location>
        <position position="1533"/>
    </location>
    <ligand>
        <name>Zn(2+)</name>
        <dbReference type="ChEBI" id="CHEBI:29105"/>
        <label>3</label>
    </ligand>
</feature>
<feature type="binding site" evidence="4">
    <location>
        <position position="1536"/>
    </location>
    <ligand>
        <name>Zn(2+)</name>
        <dbReference type="ChEBI" id="CHEBI:29105"/>
        <label>3</label>
    </ligand>
</feature>
<feature type="binding site" evidence="4">
    <location>
        <position position="1548"/>
    </location>
    <ligand>
        <name>Zn(2+)</name>
        <dbReference type="ChEBI" id="CHEBI:29105"/>
        <label>4</label>
    </ligand>
</feature>
<feature type="binding site" evidence="4">
    <location>
        <position position="1551"/>
    </location>
    <ligand>
        <name>Zn(2+)</name>
        <dbReference type="ChEBI" id="CHEBI:29105"/>
        <label>4</label>
    </ligand>
</feature>
<feature type="binding site" evidence="4">
    <location>
        <position position="1557"/>
    </location>
    <ligand>
        <name>Zn(2+)</name>
        <dbReference type="ChEBI" id="CHEBI:29105"/>
        <label>3</label>
    </ligand>
</feature>
<feature type="binding site" evidence="4">
    <location>
        <position position="1560"/>
    </location>
    <ligand>
        <name>Zn(2+)</name>
        <dbReference type="ChEBI" id="CHEBI:29105"/>
        <label>3</label>
    </ligand>
</feature>
<feature type="binding site" evidence="4">
    <location>
        <position position="1569"/>
    </location>
    <ligand>
        <name>Zn(2+)</name>
        <dbReference type="ChEBI" id="CHEBI:29105"/>
        <label>4</label>
    </ligand>
</feature>
<feature type="binding site" evidence="4">
    <location>
        <position position="1571"/>
    </location>
    <ligand>
        <name>Zn(2+)</name>
        <dbReference type="ChEBI" id="CHEBI:29105"/>
        <label>4</label>
    </ligand>
</feature>
<proteinExistence type="inferred from homology"/>